<proteinExistence type="inferred from homology"/>
<reference key="1">
    <citation type="journal article" date="2004" name="Nature">
        <title>Genome evolution in yeasts.</title>
        <authorList>
            <person name="Dujon B."/>
            <person name="Sherman D."/>
            <person name="Fischer G."/>
            <person name="Durrens P."/>
            <person name="Casaregola S."/>
            <person name="Lafontaine I."/>
            <person name="de Montigny J."/>
            <person name="Marck C."/>
            <person name="Neuveglise C."/>
            <person name="Talla E."/>
            <person name="Goffard N."/>
            <person name="Frangeul L."/>
            <person name="Aigle M."/>
            <person name="Anthouard V."/>
            <person name="Babour A."/>
            <person name="Barbe V."/>
            <person name="Barnay S."/>
            <person name="Blanchin S."/>
            <person name="Beckerich J.-M."/>
            <person name="Beyne E."/>
            <person name="Bleykasten C."/>
            <person name="Boisrame A."/>
            <person name="Boyer J."/>
            <person name="Cattolico L."/>
            <person name="Confanioleri F."/>
            <person name="de Daruvar A."/>
            <person name="Despons L."/>
            <person name="Fabre E."/>
            <person name="Fairhead C."/>
            <person name="Ferry-Dumazet H."/>
            <person name="Groppi A."/>
            <person name="Hantraye F."/>
            <person name="Hennequin C."/>
            <person name="Jauniaux N."/>
            <person name="Joyet P."/>
            <person name="Kachouri R."/>
            <person name="Kerrest A."/>
            <person name="Koszul R."/>
            <person name="Lemaire M."/>
            <person name="Lesur I."/>
            <person name="Ma L."/>
            <person name="Muller H."/>
            <person name="Nicaud J.-M."/>
            <person name="Nikolski M."/>
            <person name="Oztas S."/>
            <person name="Ozier-Kalogeropoulos O."/>
            <person name="Pellenz S."/>
            <person name="Potier S."/>
            <person name="Richard G.-F."/>
            <person name="Straub M.-L."/>
            <person name="Suleau A."/>
            <person name="Swennen D."/>
            <person name="Tekaia F."/>
            <person name="Wesolowski-Louvel M."/>
            <person name="Westhof E."/>
            <person name="Wirth B."/>
            <person name="Zeniou-Meyer M."/>
            <person name="Zivanovic Y."/>
            <person name="Bolotin-Fukuhara M."/>
            <person name="Thierry A."/>
            <person name="Bouchier C."/>
            <person name="Caudron B."/>
            <person name="Scarpelli C."/>
            <person name="Gaillardin C."/>
            <person name="Weissenbach J."/>
            <person name="Wincker P."/>
            <person name="Souciet J.-L."/>
        </authorList>
    </citation>
    <scope>NUCLEOTIDE SEQUENCE [LARGE SCALE GENOMIC DNA]</scope>
    <source>
        <strain>ATCC 36239 / CBS 767 / BCRC 21394 / JCM 1990 / NBRC 0083 / IGC 2968</strain>
    </source>
</reference>
<sequence>MSRRERYSVEPIPNDANEFQDNVSFIHKFITNWLITDPSLRNPGSEKNVKAKNYQVQKHENVQFIYLCGGRLRSVKQKPINVVTGISILIPGILFWIFEAKWIWFHVNPSIVILFSYFWLITVSFFIKASMSDPGMLPRNIHVPYSISNANTSPKASPPDEYFNIISLPYNAEDHTGVGLKYCATCHIWRSPRASHCSVCNSCIISHDHHCVFLNNCIGYRNYKYFLWFLLFAVLGCILMSVISFIHVFYYRLGMETSVSTFRSSISKYPVSFLLCIYSLLALVYPFPLLIFHIFLTSYNLTTREYFNNVRGVKNSQNHFTNHFDTHSIFKNLYINWLGRARGFSLVRQTDSYQIGDLRFEKLDPLQSFSS</sequence>
<comment type="function">
    <text evidence="1">The ERF2-ERF4 complex is a palmitoyltransferase specific for Ras proteins.</text>
</comment>
<comment type="catalytic activity">
    <reaction evidence="2">
        <text>L-cysteinyl-[protein] + hexadecanoyl-CoA = S-hexadecanoyl-L-cysteinyl-[protein] + CoA</text>
        <dbReference type="Rhea" id="RHEA:36683"/>
        <dbReference type="Rhea" id="RHEA-COMP:10131"/>
        <dbReference type="Rhea" id="RHEA-COMP:11032"/>
        <dbReference type="ChEBI" id="CHEBI:29950"/>
        <dbReference type="ChEBI" id="CHEBI:57287"/>
        <dbReference type="ChEBI" id="CHEBI:57379"/>
        <dbReference type="ChEBI" id="CHEBI:74151"/>
        <dbReference type="EC" id="2.3.1.225"/>
    </reaction>
</comment>
<comment type="subunit">
    <text evidence="1">Interacts with ERF4.</text>
</comment>
<comment type="subcellular location">
    <subcellularLocation>
        <location evidence="1">Endoplasmic reticulum membrane</location>
        <topology evidence="1">Multi-pass membrane protein</topology>
    </subcellularLocation>
</comment>
<comment type="domain">
    <text evidence="1">The DHHC domain is required for palmitoyltransferase activity.</text>
</comment>
<comment type="PTM">
    <text evidence="3">Autopalmitoylated.</text>
</comment>
<comment type="similarity">
    <text evidence="6">Belongs to the DHHC palmitoyltransferase family. ERF2/ZDHHC9 subfamily.</text>
</comment>
<keyword id="KW-0012">Acyltransferase</keyword>
<keyword id="KW-0256">Endoplasmic reticulum</keyword>
<keyword id="KW-0449">Lipoprotein</keyword>
<keyword id="KW-0472">Membrane</keyword>
<keyword id="KW-0564">Palmitate</keyword>
<keyword id="KW-1185">Reference proteome</keyword>
<keyword id="KW-0808">Transferase</keyword>
<keyword id="KW-0812">Transmembrane</keyword>
<keyword id="KW-1133">Transmembrane helix</keyword>
<protein>
    <recommendedName>
        <fullName>Palmitoyltransferase ERF2</fullName>
        <ecNumber evidence="2">2.3.1.225</ecNumber>
    </recommendedName>
    <alternativeName>
        <fullName>DHHC cysteine-rich domain-containing protein ERF2</fullName>
    </alternativeName>
    <alternativeName>
        <fullName>Ras protein acyltransferase</fullName>
    </alternativeName>
</protein>
<evidence type="ECO:0000250" key="1">
    <source>
        <dbReference type="UniProtKB" id="Q06551"/>
    </source>
</evidence>
<evidence type="ECO:0000250" key="2">
    <source>
        <dbReference type="UniProtKB" id="Q8VDZ4"/>
    </source>
</evidence>
<evidence type="ECO:0000250" key="3">
    <source>
        <dbReference type="UniProtKB" id="Q9UIJ5"/>
    </source>
</evidence>
<evidence type="ECO:0000255" key="4"/>
<evidence type="ECO:0000255" key="5">
    <source>
        <dbReference type="PROSITE-ProRule" id="PRU00067"/>
    </source>
</evidence>
<evidence type="ECO:0000305" key="6"/>
<feature type="chain" id="PRO_0000212941" description="Palmitoyltransferase ERF2">
    <location>
        <begin position="1"/>
        <end position="371"/>
    </location>
</feature>
<feature type="topological domain" description="Cytoplasmic" evidence="4">
    <location>
        <begin position="1"/>
        <end position="79"/>
    </location>
</feature>
<feature type="transmembrane region" description="Helical" evidence="4">
    <location>
        <begin position="80"/>
        <end position="100"/>
    </location>
</feature>
<feature type="topological domain" description="Lumenal" evidence="4">
    <location>
        <begin position="101"/>
        <end position="106"/>
    </location>
</feature>
<feature type="transmembrane region" description="Helical" evidence="4">
    <location>
        <begin position="107"/>
        <end position="127"/>
    </location>
</feature>
<feature type="topological domain" description="Cytoplasmic" evidence="4">
    <location>
        <begin position="128"/>
        <end position="225"/>
    </location>
</feature>
<feature type="transmembrane region" description="Helical" evidence="4">
    <location>
        <begin position="226"/>
        <end position="246"/>
    </location>
</feature>
<feature type="topological domain" description="Lumenal" evidence="4">
    <location>
        <begin position="247"/>
        <end position="274"/>
    </location>
</feature>
<feature type="transmembrane region" description="Helical" evidence="4">
    <location>
        <begin position="275"/>
        <end position="295"/>
    </location>
</feature>
<feature type="topological domain" description="Cytoplasmic" evidence="4">
    <location>
        <begin position="296"/>
        <end position="371"/>
    </location>
</feature>
<feature type="domain" description="DHHC" evidence="5">
    <location>
        <begin position="181"/>
        <end position="231"/>
    </location>
</feature>
<feature type="active site" description="S-palmitoyl cysteine intermediate" evidence="2">
    <location>
        <position position="211"/>
    </location>
</feature>
<name>ERFB_DEBHA</name>
<organism>
    <name type="scientific">Debaryomyces hansenii (strain ATCC 36239 / CBS 767 / BCRC 21394 / JCM 1990 / NBRC 0083 / IGC 2968)</name>
    <name type="common">Yeast</name>
    <name type="synonym">Torulaspora hansenii</name>
    <dbReference type="NCBI Taxonomy" id="284592"/>
    <lineage>
        <taxon>Eukaryota</taxon>
        <taxon>Fungi</taxon>
        <taxon>Dikarya</taxon>
        <taxon>Ascomycota</taxon>
        <taxon>Saccharomycotina</taxon>
        <taxon>Pichiomycetes</taxon>
        <taxon>Debaryomycetaceae</taxon>
        <taxon>Debaryomyces</taxon>
    </lineage>
</organism>
<dbReference type="EC" id="2.3.1.225" evidence="2"/>
<dbReference type="EMBL" id="CR382139">
    <property type="protein sequence ID" value="CAG90733.2"/>
    <property type="molecule type" value="Genomic_DNA"/>
</dbReference>
<dbReference type="RefSeq" id="XP_462237.2">
    <property type="nucleotide sequence ID" value="XM_462237.1"/>
</dbReference>
<dbReference type="SMR" id="Q6BHT4"/>
<dbReference type="FunCoup" id="Q6BHT4">
    <property type="interactions" value="186"/>
</dbReference>
<dbReference type="STRING" id="284592.Q6BHT4"/>
<dbReference type="GeneID" id="2905161"/>
<dbReference type="KEGG" id="dha:DEHA2G15972g"/>
<dbReference type="VEuPathDB" id="FungiDB:DEHA2G15972g"/>
<dbReference type="eggNOG" id="KOG1311">
    <property type="taxonomic scope" value="Eukaryota"/>
</dbReference>
<dbReference type="HOGENOM" id="CLU_047581_1_0_1"/>
<dbReference type="InParanoid" id="Q6BHT4"/>
<dbReference type="OMA" id="CGTCHIW"/>
<dbReference type="OrthoDB" id="9909019at2759"/>
<dbReference type="Proteomes" id="UP000000599">
    <property type="component" value="Chromosome G"/>
</dbReference>
<dbReference type="GO" id="GO:0032541">
    <property type="term" value="C:cortical endoplasmic reticulum"/>
    <property type="evidence" value="ECO:0007669"/>
    <property type="project" value="EnsemblFungi"/>
</dbReference>
<dbReference type="GO" id="GO:0005789">
    <property type="term" value="C:endoplasmic reticulum membrane"/>
    <property type="evidence" value="ECO:0007669"/>
    <property type="project" value="UniProtKB-SubCell"/>
</dbReference>
<dbReference type="GO" id="GO:0031211">
    <property type="term" value="C:endoplasmic reticulum palmitoyltransferase complex"/>
    <property type="evidence" value="ECO:0007669"/>
    <property type="project" value="EnsemblFungi"/>
</dbReference>
<dbReference type="GO" id="GO:0005794">
    <property type="term" value="C:Golgi apparatus"/>
    <property type="evidence" value="ECO:0007669"/>
    <property type="project" value="TreeGrafter"/>
</dbReference>
<dbReference type="GO" id="GO:0097038">
    <property type="term" value="C:perinuclear endoplasmic reticulum"/>
    <property type="evidence" value="ECO:0007669"/>
    <property type="project" value="EnsemblFungi"/>
</dbReference>
<dbReference type="GO" id="GO:0019706">
    <property type="term" value="F:protein-cysteine S-palmitoyltransferase activity"/>
    <property type="evidence" value="ECO:0007669"/>
    <property type="project" value="UniProtKB-EC"/>
</dbReference>
<dbReference type="GO" id="GO:0006612">
    <property type="term" value="P:protein targeting to membrane"/>
    <property type="evidence" value="ECO:0007669"/>
    <property type="project" value="EnsemblFungi"/>
</dbReference>
<dbReference type="InterPro" id="IPR001594">
    <property type="entry name" value="Palmitoyltrfase_DHHC"/>
</dbReference>
<dbReference type="InterPro" id="IPR039859">
    <property type="entry name" value="PFA4/ZDH16/20/ERF2-like"/>
</dbReference>
<dbReference type="PANTHER" id="PTHR22883:SF43">
    <property type="entry name" value="PALMITOYLTRANSFERASE APP"/>
    <property type="match status" value="1"/>
</dbReference>
<dbReference type="PANTHER" id="PTHR22883">
    <property type="entry name" value="ZINC FINGER DHHC DOMAIN CONTAINING PROTEIN"/>
    <property type="match status" value="1"/>
</dbReference>
<dbReference type="Pfam" id="PF01529">
    <property type="entry name" value="DHHC"/>
    <property type="match status" value="1"/>
</dbReference>
<dbReference type="PROSITE" id="PS50216">
    <property type="entry name" value="DHHC"/>
    <property type="match status" value="1"/>
</dbReference>
<accession>Q6BHT4</accession>
<gene>
    <name type="primary">ERF2</name>
    <name type="ordered locus">DEHA2G15972g</name>
</gene>